<sequence length="1322" mass="153058">MNRIDEEPQIHEDPVENREEDDEDEDDQYEFDDGFLVNGSDDGEEEEEQRHCSEKKSRSRRKKDESFTLHEDDYLLLKDNNDTFQRNKYKRLKKSSEEEDKINNDDDDDDLSHFIVDEDDHGAQGMRRKKMKYKQGTDSNALRYANDVFGDPEELLKLRKKDLKYNEKIERKLEDEFEPMVLSEKYMTEKDDEIRKLDVPERMQIFEEAIGIVSLDDMSIQEESNWIYARLLQEQGQGCLINKDDIVKFLEMFHVQKLEIPFIAMYRKEQCRSLLDSSDDDHDGSDFNLDKKLETKWHKVLWMIQDLDRKWVLLRKRKTALFGYYTKRFEEETCMSDLNKSLFESVIKSLQAAETEREVDDVDSKFNLHFPHCEIDEGQYKRPNRKSQYSICSKFGIKEFANKFGYSAEQLGLALSLEKVFVDELEDAKKTPEEMALNYECAMFGDSQAVLKGARHMAAVEISCEPSIRKYVRGIFMENAVVSTSPTPDGNVVIDSFHRFSAVKWLSEKPLRKFDGVQWLLIQKAEEEKLLQVTFKLPENQMNRIISECSEHYLSVGVSKYAQLWNEQRKLILEDAVHGFVLPSMEKEARSLLTSRAKTQLLSEYGQVLWNKVSSGPYRRNNNTSEEEAAPRVLACCWGPGNPETTFVMLDSSGELVDVLYSGSIGLRSRDVNDQKRKKMDQDRFLKFIRDHQPDVLALAAVNLSCVRLKDEIYEAIFQMVEELPLNYVDDRIYDFPLVYADESLPRLYENSRISSEQLPQQAGIVKRAVSLGRYLQNPLAMISTLCGPGRDILSWKLHSFQDFLDPDEKYEMVEQVMVDITNQVGIDINLAASHEWLFSPLQFVSGLGPRKAASLQKSLVRAGSIFVRKELINHGIGKKVFVNAAGFLRIRRSGLACSSSQFIDLLDDTRIHPESYGLAQELAKDVYAHDTVRGDEDDAIEMAIEHVRDEPASLRKIVLDEYLRSKNQENKKETYSLIMRELSCGFQDWRSLFKEVDSDEEFYMISGETKETIGEGRIVQATVKKVTSGKAKCVLDCGLPGILLKEDYSDDGRDIVDLSNKLCEGDIVTCKVKSILKQRYHVLLVCKESEMRKHRNLGDVDDYYHEEKRNSVLIEKEKVPKEKKQFKSRMIVHPRFQNITAEQATVYLSDKNIGESIVRPSSRGLNHLTLMIKISDNVYANKEIIEGEKENKDIVSLQRIGKTLKIGNETFEDLDEVMDRYVDPLVTHLMTMLNHRKFRTGTKSEIDDLLRVEKGVNPKMVVYSFGVSHEHPGSFILSYIRSANPHHEYIGLYPKGFKFRKRMFGDLDKLAAYFKRHIDNQ</sequence>
<proteinExistence type="evidence at protein level"/>
<dbReference type="EMBL" id="AC010795">
    <property type="protein sequence ID" value="AAG51608.1"/>
    <property type="status" value="ALT_SEQ"/>
    <property type="molecule type" value="Genomic_DNA"/>
</dbReference>
<dbReference type="EMBL" id="CP002684">
    <property type="protein sequence ID" value="AEE34070.1"/>
    <property type="status" value="ALT_SEQ"/>
    <property type="molecule type" value="Genomic_DNA"/>
</dbReference>
<dbReference type="RefSeq" id="NP_176510.1">
    <property type="nucleotide sequence ID" value="NM_105000.1"/>
</dbReference>
<dbReference type="SMR" id="Q9CAM1"/>
<dbReference type="FunCoup" id="Q9CAM1">
    <property type="interactions" value="4125"/>
</dbReference>
<dbReference type="STRING" id="3702.Q9CAM1"/>
<dbReference type="GlyGen" id="Q9CAM1">
    <property type="glycosylation" value="1 site"/>
</dbReference>
<dbReference type="PaxDb" id="3702-AT1G63210.1"/>
<dbReference type="ProteomicsDB" id="228370"/>
<dbReference type="GeneID" id="842626"/>
<dbReference type="KEGG" id="ath:AT1G63210"/>
<dbReference type="Araport" id="AT1G63210"/>
<dbReference type="TAIR" id="AT1G63210"/>
<dbReference type="eggNOG" id="KOG1856">
    <property type="taxonomic scope" value="Eukaryota"/>
</dbReference>
<dbReference type="HOGENOM" id="CLU_001680_2_0_1"/>
<dbReference type="InParanoid" id="Q9CAM1"/>
<dbReference type="PhylomeDB" id="Q9CAM1"/>
<dbReference type="PRO" id="PR:Q9CAM1"/>
<dbReference type="Proteomes" id="UP000006548">
    <property type="component" value="Chromosome 1"/>
</dbReference>
<dbReference type="ExpressionAtlas" id="Q9CAM1">
    <property type="expression patterns" value="baseline and differential"/>
</dbReference>
<dbReference type="GO" id="GO:0005829">
    <property type="term" value="C:cytosol"/>
    <property type="evidence" value="ECO:0007005"/>
    <property type="project" value="TAIR"/>
</dbReference>
<dbReference type="GO" id="GO:0008023">
    <property type="term" value="C:transcription elongation factor complex"/>
    <property type="evidence" value="ECO:0000318"/>
    <property type="project" value="GO_Central"/>
</dbReference>
<dbReference type="GO" id="GO:0042393">
    <property type="term" value="F:histone binding"/>
    <property type="evidence" value="ECO:0000318"/>
    <property type="project" value="GO_Central"/>
</dbReference>
<dbReference type="GO" id="GO:0003676">
    <property type="term" value="F:nucleic acid binding"/>
    <property type="evidence" value="ECO:0007669"/>
    <property type="project" value="InterPro"/>
</dbReference>
<dbReference type="GO" id="GO:0031491">
    <property type="term" value="F:nucleosome binding"/>
    <property type="evidence" value="ECO:0000318"/>
    <property type="project" value="GO_Central"/>
</dbReference>
<dbReference type="GO" id="GO:0009793">
    <property type="term" value="P:embryo development ending in seed dormancy"/>
    <property type="evidence" value="ECO:0000315"/>
    <property type="project" value="TAIR"/>
</dbReference>
<dbReference type="GO" id="GO:0034728">
    <property type="term" value="P:nucleosome organization"/>
    <property type="evidence" value="ECO:0000318"/>
    <property type="project" value="GO_Central"/>
</dbReference>
<dbReference type="GO" id="GO:0006368">
    <property type="term" value="P:transcription elongation by RNA polymerase II"/>
    <property type="evidence" value="ECO:0000318"/>
    <property type="project" value="GO_Central"/>
</dbReference>
<dbReference type="GO" id="GO:0140673">
    <property type="term" value="P:transcription elongation-coupled chromatin remodeling"/>
    <property type="evidence" value="ECO:0007669"/>
    <property type="project" value="InterPro"/>
</dbReference>
<dbReference type="CDD" id="cd09928">
    <property type="entry name" value="SH2_Cterm_SPT6_like"/>
    <property type="match status" value="1"/>
</dbReference>
<dbReference type="CDD" id="cd09918">
    <property type="entry name" value="SH2_Nterm_SPT6_like"/>
    <property type="match status" value="1"/>
</dbReference>
<dbReference type="FunFam" id="1.10.10.2740:FF:000002">
    <property type="entry name" value="Transcription elongation factor Spt6"/>
    <property type="match status" value="1"/>
</dbReference>
<dbReference type="FunFam" id="1.10.150.850:FF:000001">
    <property type="entry name" value="Transcription elongation factor spt6"/>
    <property type="match status" value="1"/>
</dbReference>
<dbReference type="FunFam" id="1.10.3500.10:FF:000004">
    <property type="entry name" value="Transcription elongation factor spt6"/>
    <property type="match status" value="1"/>
</dbReference>
<dbReference type="FunFam" id="2.40.50.140:FF:000256">
    <property type="entry name" value="Transcription elongation factor spt6"/>
    <property type="match status" value="1"/>
</dbReference>
<dbReference type="FunFam" id="3.30.420.140:FF:000006">
    <property type="entry name" value="Transcription elongation factor spt6"/>
    <property type="match status" value="1"/>
</dbReference>
<dbReference type="FunFam" id="3.30.505.10:FF:000047">
    <property type="entry name" value="Transcription elongation factor spt6"/>
    <property type="match status" value="1"/>
</dbReference>
<dbReference type="FunFam" id="3.30.505.10:FF:000050">
    <property type="entry name" value="Transcription elongation factor spt6"/>
    <property type="match status" value="1"/>
</dbReference>
<dbReference type="Gene3D" id="2.40.50.140">
    <property type="entry name" value="Nucleic acid-binding proteins"/>
    <property type="match status" value="1"/>
</dbReference>
<dbReference type="Gene3D" id="1.10.10.650">
    <property type="entry name" value="RuvA domain 2-like"/>
    <property type="match status" value="1"/>
</dbReference>
<dbReference type="Gene3D" id="3.30.505.10">
    <property type="entry name" value="SH2 domain"/>
    <property type="match status" value="2"/>
</dbReference>
<dbReference type="Gene3D" id="1.10.10.2740">
    <property type="entry name" value="Spt6, Death-like domain"/>
    <property type="match status" value="1"/>
</dbReference>
<dbReference type="Gene3D" id="1.10.150.850">
    <property type="entry name" value="Spt6, helix-hairpin-helix domain"/>
    <property type="match status" value="1"/>
</dbReference>
<dbReference type="Gene3D" id="1.10.3500.10">
    <property type="entry name" value="Tex N-terminal region-like"/>
    <property type="match status" value="1"/>
</dbReference>
<dbReference type="Gene3D" id="3.30.420.140">
    <property type="entry name" value="YqgF/RNase H-like domain"/>
    <property type="match status" value="1"/>
</dbReference>
<dbReference type="InterPro" id="IPR041692">
    <property type="entry name" value="HHH_9"/>
</dbReference>
<dbReference type="InterPro" id="IPR012340">
    <property type="entry name" value="NA-bd_OB-fold"/>
</dbReference>
<dbReference type="InterPro" id="IPR012337">
    <property type="entry name" value="RNaseH-like_sf"/>
</dbReference>
<dbReference type="InterPro" id="IPR010994">
    <property type="entry name" value="RuvA_2-like"/>
</dbReference>
<dbReference type="InterPro" id="IPR003029">
    <property type="entry name" value="S1_domain"/>
</dbReference>
<dbReference type="InterPro" id="IPR036860">
    <property type="entry name" value="SH2_dom_sf"/>
</dbReference>
<dbReference type="InterPro" id="IPR049540">
    <property type="entry name" value="Spt6-like_S1"/>
</dbReference>
<dbReference type="InterPro" id="IPR028083">
    <property type="entry name" value="Spt6_acidic_N_dom"/>
</dbReference>
<dbReference type="InterPro" id="IPR042066">
    <property type="entry name" value="Spt6_death-like"/>
</dbReference>
<dbReference type="InterPro" id="IPR032706">
    <property type="entry name" value="Spt6_HHH"/>
</dbReference>
<dbReference type="InterPro" id="IPR035420">
    <property type="entry name" value="Spt6_SH2"/>
</dbReference>
<dbReference type="InterPro" id="IPR035018">
    <property type="entry name" value="Spt6_SH2_C"/>
</dbReference>
<dbReference type="InterPro" id="IPR035019">
    <property type="entry name" value="Spt6_SH2_N"/>
</dbReference>
<dbReference type="InterPro" id="IPR028231">
    <property type="entry name" value="Spt6_YqgF"/>
</dbReference>
<dbReference type="InterPro" id="IPR055179">
    <property type="entry name" value="Tex-like_central_region"/>
</dbReference>
<dbReference type="InterPro" id="IPR023323">
    <property type="entry name" value="Tex-like_dom_sf"/>
</dbReference>
<dbReference type="InterPro" id="IPR023319">
    <property type="entry name" value="Tex-like_HTH_dom_sf"/>
</dbReference>
<dbReference type="InterPro" id="IPR017072">
    <property type="entry name" value="TF_Spt6"/>
</dbReference>
<dbReference type="InterPro" id="IPR006641">
    <property type="entry name" value="YqgF/RNaseH-like_dom"/>
</dbReference>
<dbReference type="InterPro" id="IPR037027">
    <property type="entry name" value="YqgF/RNaseH-like_dom_sf"/>
</dbReference>
<dbReference type="PANTHER" id="PTHR10145">
    <property type="entry name" value="TRANSCRIPTION ELONGATION FACTOR SPT6"/>
    <property type="match status" value="1"/>
</dbReference>
<dbReference type="PANTHER" id="PTHR10145:SF6">
    <property type="entry name" value="TRANSCRIPTION ELONGATION FACTOR SPT6"/>
    <property type="match status" value="1"/>
</dbReference>
<dbReference type="Pfam" id="PF14635">
    <property type="entry name" value="HHH_7"/>
    <property type="match status" value="1"/>
</dbReference>
<dbReference type="Pfam" id="PF17674">
    <property type="entry name" value="HHH_9"/>
    <property type="match status" value="1"/>
</dbReference>
<dbReference type="Pfam" id="PF14633">
    <property type="entry name" value="SH2_2"/>
    <property type="match status" value="1"/>
</dbReference>
<dbReference type="Pfam" id="PF14632">
    <property type="entry name" value="SPT6_acidic"/>
    <property type="match status" value="1"/>
</dbReference>
<dbReference type="Pfam" id="PF21710">
    <property type="entry name" value="Spt6_S1"/>
    <property type="match status" value="1"/>
</dbReference>
<dbReference type="Pfam" id="PF22706">
    <property type="entry name" value="Tex_central_region"/>
    <property type="match status" value="1"/>
</dbReference>
<dbReference type="Pfam" id="PF14639">
    <property type="entry name" value="YqgF"/>
    <property type="match status" value="1"/>
</dbReference>
<dbReference type="PIRSF" id="PIRSF036947">
    <property type="entry name" value="Spt6"/>
    <property type="match status" value="1"/>
</dbReference>
<dbReference type="SMART" id="SM00316">
    <property type="entry name" value="S1"/>
    <property type="match status" value="1"/>
</dbReference>
<dbReference type="SMART" id="SM00732">
    <property type="entry name" value="YqgFc"/>
    <property type="match status" value="1"/>
</dbReference>
<dbReference type="SUPFAM" id="SSF50249">
    <property type="entry name" value="Nucleic acid-binding proteins"/>
    <property type="match status" value="1"/>
</dbReference>
<dbReference type="SUPFAM" id="SSF53098">
    <property type="entry name" value="Ribonuclease H-like"/>
    <property type="match status" value="1"/>
</dbReference>
<dbReference type="SUPFAM" id="SSF47781">
    <property type="entry name" value="RuvA domain 2-like"/>
    <property type="match status" value="2"/>
</dbReference>
<dbReference type="SUPFAM" id="SSF158832">
    <property type="entry name" value="Tex N-terminal region-like"/>
    <property type="match status" value="1"/>
</dbReference>
<dbReference type="PROSITE" id="PS50126">
    <property type="entry name" value="S1"/>
    <property type="match status" value="1"/>
</dbReference>
<gene>
    <name evidence="5" type="ordered locus">At1g63210</name>
    <name evidence="6" type="ORF">F16M19.22</name>
</gene>
<reference key="1">
    <citation type="journal article" date="2000" name="Nature">
        <title>Sequence and analysis of chromosome 1 of the plant Arabidopsis thaliana.</title>
        <authorList>
            <person name="Theologis A."/>
            <person name="Ecker J.R."/>
            <person name="Palm C.J."/>
            <person name="Federspiel N.A."/>
            <person name="Kaul S."/>
            <person name="White O."/>
            <person name="Alonso J."/>
            <person name="Altafi H."/>
            <person name="Araujo R."/>
            <person name="Bowman C.L."/>
            <person name="Brooks S.Y."/>
            <person name="Buehler E."/>
            <person name="Chan A."/>
            <person name="Chao Q."/>
            <person name="Chen H."/>
            <person name="Cheuk R.F."/>
            <person name="Chin C.W."/>
            <person name="Chung M.K."/>
            <person name="Conn L."/>
            <person name="Conway A.B."/>
            <person name="Conway A.R."/>
            <person name="Creasy T.H."/>
            <person name="Dewar K."/>
            <person name="Dunn P."/>
            <person name="Etgu P."/>
            <person name="Feldblyum T.V."/>
            <person name="Feng J.-D."/>
            <person name="Fong B."/>
            <person name="Fujii C.Y."/>
            <person name="Gill J.E."/>
            <person name="Goldsmith A.D."/>
            <person name="Haas B."/>
            <person name="Hansen N.F."/>
            <person name="Hughes B."/>
            <person name="Huizar L."/>
            <person name="Hunter J.L."/>
            <person name="Jenkins J."/>
            <person name="Johnson-Hopson C."/>
            <person name="Khan S."/>
            <person name="Khaykin E."/>
            <person name="Kim C.J."/>
            <person name="Koo H.L."/>
            <person name="Kremenetskaia I."/>
            <person name="Kurtz D.B."/>
            <person name="Kwan A."/>
            <person name="Lam B."/>
            <person name="Langin-Hooper S."/>
            <person name="Lee A."/>
            <person name="Lee J.M."/>
            <person name="Lenz C.A."/>
            <person name="Li J.H."/>
            <person name="Li Y.-P."/>
            <person name="Lin X."/>
            <person name="Liu S.X."/>
            <person name="Liu Z.A."/>
            <person name="Luros J.S."/>
            <person name="Maiti R."/>
            <person name="Marziali A."/>
            <person name="Militscher J."/>
            <person name="Miranda M."/>
            <person name="Nguyen M."/>
            <person name="Nierman W.C."/>
            <person name="Osborne B.I."/>
            <person name="Pai G."/>
            <person name="Peterson J."/>
            <person name="Pham P.K."/>
            <person name="Rizzo M."/>
            <person name="Rooney T."/>
            <person name="Rowley D."/>
            <person name="Sakano H."/>
            <person name="Salzberg S.L."/>
            <person name="Schwartz J.R."/>
            <person name="Shinn P."/>
            <person name="Southwick A.M."/>
            <person name="Sun H."/>
            <person name="Tallon L.J."/>
            <person name="Tambunga G."/>
            <person name="Toriumi M.J."/>
            <person name="Town C.D."/>
            <person name="Utterback T."/>
            <person name="Van Aken S."/>
            <person name="Vaysberg M."/>
            <person name="Vysotskaia V.S."/>
            <person name="Walker M."/>
            <person name="Wu D."/>
            <person name="Yu G."/>
            <person name="Fraser C.M."/>
            <person name="Venter J.C."/>
            <person name="Davis R.W."/>
        </authorList>
    </citation>
    <scope>NUCLEOTIDE SEQUENCE [LARGE SCALE GENOMIC DNA]</scope>
    <source>
        <strain>cv. Columbia</strain>
    </source>
</reference>
<reference key="2">
    <citation type="journal article" date="2017" name="Plant J.">
        <title>Araport11: a complete reannotation of the Arabidopsis thaliana reference genome.</title>
        <authorList>
            <person name="Cheng C.Y."/>
            <person name="Krishnakumar V."/>
            <person name="Chan A.P."/>
            <person name="Thibaud-Nissen F."/>
            <person name="Schobel S."/>
            <person name="Town C.D."/>
        </authorList>
    </citation>
    <scope>GENOME REANNOTATION</scope>
    <source>
        <strain>cv. Columbia</strain>
    </source>
</reference>
<reference key="3">
    <citation type="journal article" date="2017" name="Mol. Cell. Proteomics">
        <title>N-terminal proteomics assisted profiling of the unexplored translation initiation landscape in Arabidopsis thaliana.</title>
        <authorList>
            <person name="Willems P."/>
            <person name="Ndah E."/>
            <person name="Jonckheere V."/>
            <person name="Stael S."/>
            <person name="Sticker A."/>
            <person name="Martens L."/>
            <person name="Van Breusegem F."/>
            <person name="Gevaert K."/>
            <person name="Van Damme P."/>
        </authorList>
    </citation>
    <scope>PROTEIN SEQUENCE OF 1-12</scope>
</reference>
<organism>
    <name type="scientific">Arabidopsis thaliana</name>
    <name type="common">Mouse-ear cress</name>
    <dbReference type="NCBI Taxonomy" id="3702"/>
    <lineage>
        <taxon>Eukaryota</taxon>
        <taxon>Viridiplantae</taxon>
        <taxon>Streptophyta</taxon>
        <taxon>Embryophyta</taxon>
        <taxon>Tracheophyta</taxon>
        <taxon>Spermatophyta</taxon>
        <taxon>Magnoliopsida</taxon>
        <taxon>eudicotyledons</taxon>
        <taxon>Gunneridae</taxon>
        <taxon>Pentapetalae</taxon>
        <taxon>rosids</taxon>
        <taxon>malvids</taxon>
        <taxon>Brassicales</taxon>
        <taxon>Brassicaceae</taxon>
        <taxon>Camelineae</taxon>
        <taxon>Arabidopsis</taxon>
    </lineage>
</organism>
<keyword id="KW-0903">Direct protein sequencing</keyword>
<keyword id="KW-0539">Nucleus</keyword>
<keyword id="KW-1185">Reference proteome</keyword>
<keyword id="KW-0804">Transcription</keyword>
<keyword id="KW-0805">Transcription regulation</keyword>
<name>SPT62_ARATH</name>
<protein>
    <recommendedName>
        <fullName evidence="4">Transcription elongation factor SPT6-like</fullName>
    </recommendedName>
</protein>
<comment type="function">
    <text evidence="1">Transcription elongation factor that enhances the transcription elongation by RNA polymerase II (RNAPII).</text>
</comment>
<comment type="subcellular location">
    <subcellularLocation>
        <location evidence="4">Nucleus</location>
    </subcellularLocation>
</comment>
<comment type="similarity">
    <text evidence="4">Belongs to the SPT6 family.</text>
</comment>
<comment type="sequence caution" evidence="4">
    <conflict type="erroneous gene model prediction">
        <sequence resource="EMBL-CDS" id="AAG51608"/>
    </conflict>
</comment>
<comment type="sequence caution" evidence="4">
    <conflict type="erroneous gene model prediction">
        <sequence resource="EMBL-CDS" id="AEE34070"/>
    </conflict>
</comment>
<feature type="chain" id="PRO_0000437501" description="Transcription elongation factor SPT6-like">
    <location>
        <begin position="1"/>
        <end position="1322"/>
    </location>
</feature>
<feature type="domain" description="S1 motif" evidence="2">
    <location>
        <begin position="1017"/>
        <end position="1088"/>
    </location>
</feature>
<feature type="region of interest" description="Disordered" evidence="3">
    <location>
        <begin position="1"/>
        <end position="65"/>
    </location>
</feature>
<feature type="region of interest" description="Disordered" evidence="3">
    <location>
        <begin position="90"/>
        <end position="113"/>
    </location>
</feature>
<feature type="compositionally biased region" description="Basic and acidic residues" evidence="3">
    <location>
        <begin position="1"/>
        <end position="17"/>
    </location>
</feature>
<feature type="compositionally biased region" description="Acidic residues" evidence="3">
    <location>
        <begin position="18"/>
        <end position="33"/>
    </location>
</feature>
<feature type="compositionally biased region" description="Basic and acidic residues" evidence="3">
    <location>
        <begin position="48"/>
        <end position="65"/>
    </location>
</feature>
<feature type="compositionally biased region" description="Acidic residues" evidence="3">
    <location>
        <begin position="97"/>
        <end position="110"/>
    </location>
</feature>
<evidence type="ECO:0000250" key="1">
    <source>
        <dbReference type="UniProtKB" id="Q7KZ85"/>
    </source>
</evidence>
<evidence type="ECO:0000255" key="2">
    <source>
        <dbReference type="PROSITE-ProRule" id="PRU00180"/>
    </source>
</evidence>
<evidence type="ECO:0000256" key="3">
    <source>
        <dbReference type="SAM" id="MobiDB-lite"/>
    </source>
</evidence>
<evidence type="ECO:0000305" key="4"/>
<evidence type="ECO:0000312" key="5">
    <source>
        <dbReference type="Araport" id="AT1G63210"/>
    </source>
</evidence>
<evidence type="ECO:0000312" key="6">
    <source>
        <dbReference type="EMBL" id="AAG51608.1"/>
    </source>
</evidence>
<accession>Q9CAM1</accession>